<comment type="function">
    <text evidence="1">One of the primary rRNA binding proteins, this protein initially binds near the 5'-end of the 23S rRNA. It is important during the early stages of 50S assembly. It makes multiple contacts with different domains of the 23S rRNA in the assembled 50S subunit and ribosome.</text>
</comment>
<comment type="function">
    <text evidence="1">Forms part of the polypeptide exit tunnel.</text>
</comment>
<comment type="subunit">
    <text evidence="1">Part of the 50S ribosomal subunit.</text>
</comment>
<comment type="similarity">
    <text evidence="1">Belongs to the universal ribosomal protein uL4 family.</text>
</comment>
<sequence length="248" mass="27009">METTIHNLNGDKADTLELPAVFETPYRPDVIERAVVAAQANRKQPYGADPYAGMRTPAESFGSGRGMAHVPRENGQARRVPQAVSGRKAHPPKAEKDQSKSVNTKERKLAFQSAVAATADPSQVEERGHQFENDVELPLVVSDEFEELIKTQEVVDVLESLGVHADIVRSDENKSIRAGRGKTRGRKYRRPKSILFITSDEPSKAARNLAGADVVTAANVSAEDLAPGTQPGRLTVYTESAIKEVADR</sequence>
<evidence type="ECO:0000255" key="1">
    <source>
        <dbReference type="HAMAP-Rule" id="MF_01328"/>
    </source>
</evidence>
<evidence type="ECO:0000256" key="2">
    <source>
        <dbReference type="SAM" id="MobiDB-lite"/>
    </source>
</evidence>
<evidence type="ECO:0000305" key="3"/>
<feature type="chain" id="PRO_1000052413" description="Large ribosomal subunit protein uL4">
    <location>
        <begin position="1"/>
        <end position="248"/>
    </location>
</feature>
<feature type="region of interest" description="Disordered" evidence="2">
    <location>
        <begin position="45"/>
        <end position="105"/>
    </location>
</feature>
<feature type="compositionally biased region" description="Basic and acidic residues" evidence="2">
    <location>
        <begin position="92"/>
        <end position="105"/>
    </location>
</feature>
<organism>
    <name type="scientific">Haloquadratum walsbyi (strain DSM 16790 / HBSQ001)</name>
    <dbReference type="NCBI Taxonomy" id="362976"/>
    <lineage>
        <taxon>Archaea</taxon>
        <taxon>Methanobacteriati</taxon>
        <taxon>Methanobacteriota</taxon>
        <taxon>Stenosarchaea group</taxon>
        <taxon>Halobacteria</taxon>
        <taxon>Halobacteriales</taxon>
        <taxon>Haloferacaceae</taxon>
        <taxon>Haloquadratum</taxon>
    </lineage>
</organism>
<keyword id="KW-1185">Reference proteome</keyword>
<keyword id="KW-0687">Ribonucleoprotein</keyword>
<keyword id="KW-0689">Ribosomal protein</keyword>
<keyword id="KW-0694">RNA-binding</keyword>
<keyword id="KW-0699">rRNA-binding</keyword>
<proteinExistence type="inferred from homology"/>
<name>RL4_HALWD</name>
<protein>
    <recommendedName>
        <fullName evidence="1">Large ribosomal subunit protein uL4</fullName>
    </recommendedName>
    <alternativeName>
        <fullName evidence="3">50S ribosomal protein L4</fullName>
    </alternativeName>
</protein>
<accession>Q18GF0</accession>
<dbReference type="EMBL" id="AM180088">
    <property type="protein sequence ID" value="CAJ52948.1"/>
    <property type="molecule type" value="Genomic_DNA"/>
</dbReference>
<dbReference type="SMR" id="Q18GF0"/>
<dbReference type="STRING" id="362976.HQ_2841A"/>
<dbReference type="GeneID" id="4194626"/>
<dbReference type="KEGG" id="hwa:HQ_2841A"/>
<dbReference type="eggNOG" id="arCOG04071">
    <property type="taxonomic scope" value="Archaea"/>
</dbReference>
<dbReference type="HOGENOM" id="CLU_026535_0_0_2"/>
<dbReference type="Proteomes" id="UP000001975">
    <property type="component" value="Chromosome"/>
</dbReference>
<dbReference type="GO" id="GO:1990904">
    <property type="term" value="C:ribonucleoprotein complex"/>
    <property type="evidence" value="ECO:0007669"/>
    <property type="project" value="UniProtKB-KW"/>
</dbReference>
<dbReference type="GO" id="GO:0005840">
    <property type="term" value="C:ribosome"/>
    <property type="evidence" value="ECO:0007669"/>
    <property type="project" value="UniProtKB-KW"/>
</dbReference>
<dbReference type="GO" id="GO:0019843">
    <property type="term" value="F:rRNA binding"/>
    <property type="evidence" value="ECO:0007669"/>
    <property type="project" value="UniProtKB-UniRule"/>
</dbReference>
<dbReference type="GO" id="GO:0003735">
    <property type="term" value="F:structural constituent of ribosome"/>
    <property type="evidence" value="ECO:0007669"/>
    <property type="project" value="InterPro"/>
</dbReference>
<dbReference type="GO" id="GO:0006412">
    <property type="term" value="P:translation"/>
    <property type="evidence" value="ECO:0007669"/>
    <property type="project" value="UniProtKB-UniRule"/>
</dbReference>
<dbReference type="Gene3D" id="3.40.1370.10">
    <property type="match status" value="1"/>
</dbReference>
<dbReference type="HAMAP" id="MF_01328_A">
    <property type="entry name" value="Ribosomal_uL4_A"/>
    <property type="match status" value="1"/>
</dbReference>
<dbReference type="InterPro" id="IPR002136">
    <property type="entry name" value="Ribosomal_uL4"/>
</dbReference>
<dbReference type="InterPro" id="IPR023574">
    <property type="entry name" value="Ribosomal_uL4_dom_sf"/>
</dbReference>
<dbReference type="InterPro" id="IPR045240">
    <property type="entry name" value="Ribosomal_uL4_euk/arch"/>
</dbReference>
<dbReference type="InterPro" id="IPR019970">
    <property type="entry name" value="Ribosomall_uL4-arc"/>
</dbReference>
<dbReference type="NCBIfam" id="TIGR03672">
    <property type="entry name" value="rpl4p_arch"/>
    <property type="match status" value="1"/>
</dbReference>
<dbReference type="PANTHER" id="PTHR19431">
    <property type="entry name" value="60S RIBOSOMAL PROTEIN L4"/>
    <property type="match status" value="1"/>
</dbReference>
<dbReference type="Pfam" id="PF00573">
    <property type="entry name" value="Ribosomal_L4"/>
    <property type="match status" value="1"/>
</dbReference>
<dbReference type="SUPFAM" id="SSF52166">
    <property type="entry name" value="Ribosomal protein L4"/>
    <property type="match status" value="1"/>
</dbReference>
<gene>
    <name evidence="1" type="primary">rpl4</name>
    <name type="ordered locus">HQ_2841A</name>
</gene>
<reference key="1">
    <citation type="journal article" date="2006" name="BMC Genomics">
        <title>The genome of the square archaeon Haloquadratum walsbyi: life at the limits of water activity.</title>
        <authorList>
            <person name="Bolhuis H."/>
            <person name="Palm P."/>
            <person name="Wende A."/>
            <person name="Falb M."/>
            <person name="Rampp M."/>
            <person name="Rodriguez-Valera F."/>
            <person name="Pfeiffer F."/>
            <person name="Oesterhelt D."/>
        </authorList>
    </citation>
    <scope>NUCLEOTIDE SEQUENCE [LARGE SCALE GENOMIC DNA]</scope>
    <source>
        <strain>DSM 16790 / HBSQ001</strain>
    </source>
</reference>